<organism>
    <name type="scientific">Bacillus subtilis (strain 168)</name>
    <dbReference type="NCBI Taxonomy" id="224308"/>
    <lineage>
        <taxon>Bacteria</taxon>
        <taxon>Bacillati</taxon>
        <taxon>Bacillota</taxon>
        <taxon>Bacilli</taxon>
        <taxon>Bacillales</taxon>
        <taxon>Bacillaceae</taxon>
        <taxon>Bacillus</taxon>
    </lineage>
</organism>
<comment type="function">
    <text evidence="3">Putative integrase that is involved in the insertion of the integrative and conjugative element ICEBs1. Required for the excision of ICEBs1 from the donor cell genome and subsequent integration in the recipient cell genome. Appears not to be transferred through the mating pore. Integration of ICEBs1 involves an attachment site in the chromosome, attB, and a site in the circular form of ICEBs1, attICEBs1.</text>
</comment>
<comment type="similarity">
    <text evidence="4">Belongs to the 'phage' integrase family.</text>
</comment>
<protein>
    <recommendedName>
        <fullName>ICEBs1 integrase</fullName>
    </recommendedName>
</protein>
<feature type="chain" id="PRO_0000360640" description="ICEBs1 integrase">
    <location>
        <begin position="1"/>
        <end position="368"/>
    </location>
</feature>
<feature type="domain" description="Core-binding (CB)" evidence="2">
    <location>
        <begin position="61"/>
        <end position="143"/>
    </location>
</feature>
<feature type="domain" description="Tyr recombinase" evidence="1">
    <location>
        <begin position="164"/>
        <end position="362"/>
    </location>
</feature>
<feature type="active site" evidence="1">
    <location>
        <position position="201"/>
    </location>
</feature>
<feature type="active site" evidence="1">
    <location>
        <position position="239"/>
    </location>
</feature>
<feature type="active site" evidence="1">
    <location>
        <position position="313"/>
    </location>
</feature>
<feature type="active site" evidence="1">
    <location>
        <position position="316"/>
    </location>
</feature>
<feature type="active site" evidence="1">
    <location>
        <position position="339"/>
    </location>
</feature>
<feature type="active site" description="O-(3'-phospho-DNA)-tyrosine intermediate" evidence="1">
    <location>
        <position position="349"/>
    </location>
</feature>
<keyword id="KW-0229">DNA integration</keyword>
<keyword id="KW-0233">DNA recombination</keyword>
<keyword id="KW-0238">DNA-binding</keyword>
<keyword id="KW-1185">Reference proteome</keyword>
<keyword id="KW-1179">Viral genome integration</keyword>
<keyword id="KW-1160">Virus entry into host cell</keyword>
<reference key="1">
    <citation type="submission" date="1997-03" db="EMBL/GenBank/DDBJ databases">
        <title>A 148 kbp sequence of the region between 35 and 47 degree of the Bacillus subtilis genome.</title>
        <authorList>
            <person name="Kasahara Y."/>
            <person name="Nakai S."/>
            <person name="Lee S."/>
            <person name="Sadaie Y."/>
            <person name="Ogasawara N."/>
        </authorList>
    </citation>
    <scope>NUCLEOTIDE SEQUENCE [GENOMIC DNA]</scope>
    <source>
        <strain>168</strain>
    </source>
</reference>
<reference key="2">
    <citation type="journal article" date="1997" name="Nature">
        <title>The complete genome sequence of the Gram-positive bacterium Bacillus subtilis.</title>
        <authorList>
            <person name="Kunst F."/>
            <person name="Ogasawara N."/>
            <person name="Moszer I."/>
            <person name="Albertini A.M."/>
            <person name="Alloni G."/>
            <person name="Azevedo V."/>
            <person name="Bertero M.G."/>
            <person name="Bessieres P."/>
            <person name="Bolotin A."/>
            <person name="Borchert S."/>
            <person name="Borriss R."/>
            <person name="Boursier L."/>
            <person name="Brans A."/>
            <person name="Braun M."/>
            <person name="Brignell S.C."/>
            <person name="Bron S."/>
            <person name="Brouillet S."/>
            <person name="Bruschi C.V."/>
            <person name="Caldwell B."/>
            <person name="Capuano V."/>
            <person name="Carter N.M."/>
            <person name="Choi S.-K."/>
            <person name="Codani J.-J."/>
            <person name="Connerton I.F."/>
            <person name="Cummings N.J."/>
            <person name="Daniel R.A."/>
            <person name="Denizot F."/>
            <person name="Devine K.M."/>
            <person name="Duesterhoeft A."/>
            <person name="Ehrlich S.D."/>
            <person name="Emmerson P.T."/>
            <person name="Entian K.-D."/>
            <person name="Errington J."/>
            <person name="Fabret C."/>
            <person name="Ferrari E."/>
            <person name="Foulger D."/>
            <person name="Fritz C."/>
            <person name="Fujita M."/>
            <person name="Fujita Y."/>
            <person name="Fuma S."/>
            <person name="Galizzi A."/>
            <person name="Galleron N."/>
            <person name="Ghim S.-Y."/>
            <person name="Glaser P."/>
            <person name="Goffeau A."/>
            <person name="Golightly E.J."/>
            <person name="Grandi G."/>
            <person name="Guiseppi G."/>
            <person name="Guy B.J."/>
            <person name="Haga K."/>
            <person name="Haiech J."/>
            <person name="Harwood C.R."/>
            <person name="Henaut A."/>
            <person name="Hilbert H."/>
            <person name="Holsappel S."/>
            <person name="Hosono S."/>
            <person name="Hullo M.-F."/>
            <person name="Itaya M."/>
            <person name="Jones L.-M."/>
            <person name="Joris B."/>
            <person name="Karamata D."/>
            <person name="Kasahara Y."/>
            <person name="Klaerr-Blanchard M."/>
            <person name="Klein C."/>
            <person name="Kobayashi Y."/>
            <person name="Koetter P."/>
            <person name="Koningstein G."/>
            <person name="Krogh S."/>
            <person name="Kumano M."/>
            <person name="Kurita K."/>
            <person name="Lapidus A."/>
            <person name="Lardinois S."/>
            <person name="Lauber J."/>
            <person name="Lazarevic V."/>
            <person name="Lee S.-M."/>
            <person name="Levine A."/>
            <person name="Liu H."/>
            <person name="Masuda S."/>
            <person name="Mauel C."/>
            <person name="Medigue C."/>
            <person name="Medina N."/>
            <person name="Mellado R.P."/>
            <person name="Mizuno M."/>
            <person name="Moestl D."/>
            <person name="Nakai S."/>
            <person name="Noback M."/>
            <person name="Noone D."/>
            <person name="O'Reilly M."/>
            <person name="Ogawa K."/>
            <person name="Ogiwara A."/>
            <person name="Oudega B."/>
            <person name="Park S.-H."/>
            <person name="Parro V."/>
            <person name="Pohl T.M."/>
            <person name="Portetelle D."/>
            <person name="Porwollik S."/>
            <person name="Prescott A.M."/>
            <person name="Presecan E."/>
            <person name="Pujic P."/>
            <person name="Purnelle B."/>
            <person name="Rapoport G."/>
            <person name="Rey M."/>
            <person name="Reynolds S."/>
            <person name="Rieger M."/>
            <person name="Rivolta C."/>
            <person name="Rocha E."/>
            <person name="Roche B."/>
            <person name="Rose M."/>
            <person name="Sadaie Y."/>
            <person name="Sato T."/>
            <person name="Scanlan E."/>
            <person name="Schleich S."/>
            <person name="Schroeter R."/>
            <person name="Scoffone F."/>
            <person name="Sekiguchi J."/>
            <person name="Sekowska A."/>
            <person name="Seror S.J."/>
            <person name="Serror P."/>
            <person name="Shin B.-S."/>
            <person name="Soldo B."/>
            <person name="Sorokin A."/>
            <person name="Tacconi E."/>
            <person name="Takagi T."/>
            <person name="Takahashi H."/>
            <person name="Takemaru K."/>
            <person name="Takeuchi M."/>
            <person name="Tamakoshi A."/>
            <person name="Tanaka T."/>
            <person name="Terpstra P."/>
            <person name="Tognoni A."/>
            <person name="Tosato V."/>
            <person name="Uchiyama S."/>
            <person name="Vandenbol M."/>
            <person name="Vannier F."/>
            <person name="Vassarotti A."/>
            <person name="Viari A."/>
            <person name="Wambutt R."/>
            <person name="Wedler E."/>
            <person name="Wedler H."/>
            <person name="Weitzenegger T."/>
            <person name="Winters P."/>
            <person name="Wipat A."/>
            <person name="Yamamoto H."/>
            <person name="Yamane K."/>
            <person name="Yasumoto K."/>
            <person name="Yata K."/>
            <person name="Yoshida K."/>
            <person name="Yoshikawa H.-F."/>
            <person name="Zumstein E."/>
            <person name="Yoshikawa H."/>
            <person name="Danchin A."/>
        </authorList>
    </citation>
    <scope>NUCLEOTIDE SEQUENCE [LARGE SCALE GENOMIC DNA]</scope>
    <source>
        <strain>168</strain>
    </source>
</reference>
<reference key="3">
    <citation type="journal article" date="2007" name="Mol. Microbiol.">
        <title>Identification and characterization of int (integrase), xis (excisionase) and chromosomal attachment sites of the integrative and conjugative element ICEBs1 of Bacillus subtilis.</title>
        <authorList>
            <person name="Lee C.A."/>
            <person name="Auchtung J.M."/>
            <person name="Monson R.E."/>
            <person name="Grossman A.D."/>
        </authorList>
    </citation>
    <scope>FUNCTION</scope>
</reference>
<accession>P96629</accession>
<accession>Q797K1</accession>
<sequence>MSVKKLENGQYQVDVSFGFDPITGERIRTRPVASTRKEALELEAKLRREFQEERARKSRSVSFPTLISIYLASCEIDSKPNYYQNQKYIINKHISDYFLKSDIQKITHREITDFRKHLMETGLSNKSVNNIMTSLSKIFDTAVHEEILKRNPCDNVKRLPLTRKKMKFWRPEEFKKFISLIPQDQLLFKTFYTVAFLTGLRCGEMLALQWKDIDKILLEIDVHKSCTWLDGQFVVTTPKTKNSIRRVSINKKLLKLLERWKEAQEELFNELGIRHSHDTYIFQYKDTPSRKDIFSRKIKYFCKDSDLTPIRLHDFRHSHVALLIHQGEDYITIKERLGHGSVKTTIDVYGHLYPNKQKEMADKLDDLL</sequence>
<proteinExistence type="inferred from homology"/>
<gene>
    <name type="primary">int</name>
    <name type="synonym">ydcL</name>
    <name type="ordered locus">BSU04800</name>
</gene>
<name>INT_BACSU</name>
<evidence type="ECO:0000255" key="1">
    <source>
        <dbReference type="PROSITE-ProRule" id="PRU01246"/>
    </source>
</evidence>
<evidence type="ECO:0000255" key="2">
    <source>
        <dbReference type="PROSITE-ProRule" id="PRU01248"/>
    </source>
</evidence>
<evidence type="ECO:0000269" key="3">
    <source>
    </source>
</evidence>
<evidence type="ECO:0000305" key="4"/>
<dbReference type="EMBL" id="AB001488">
    <property type="protein sequence ID" value="BAA19318.1"/>
    <property type="molecule type" value="Genomic_DNA"/>
</dbReference>
<dbReference type="EMBL" id="AL009126">
    <property type="protein sequence ID" value="CAB12287.1"/>
    <property type="molecule type" value="Genomic_DNA"/>
</dbReference>
<dbReference type="PIR" id="A69774">
    <property type="entry name" value="A69774"/>
</dbReference>
<dbReference type="RefSeq" id="NP_388361.1">
    <property type="nucleotide sequence ID" value="NC_000964.3"/>
</dbReference>
<dbReference type="RefSeq" id="WP_009966615.1">
    <property type="nucleotide sequence ID" value="NZ_OZ025638.1"/>
</dbReference>
<dbReference type="SMR" id="P96629"/>
<dbReference type="FunCoup" id="P96629">
    <property type="interactions" value="96"/>
</dbReference>
<dbReference type="STRING" id="224308.BSU04800"/>
<dbReference type="TCDB" id="3.A.7.14.3">
    <property type="family name" value="the type iv (conjugal dna-protein transfer or virb) secretory pathway (ivsp) family"/>
</dbReference>
<dbReference type="PaxDb" id="224308-BSU04800"/>
<dbReference type="EnsemblBacteria" id="CAB12287">
    <property type="protein sequence ID" value="CAB12287"/>
    <property type="gene ID" value="BSU_04800"/>
</dbReference>
<dbReference type="GeneID" id="938151"/>
<dbReference type="KEGG" id="bsu:BSU04800"/>
<dbReference type="PATRIC" id="fig|224308.179.peg.510"/>
<dbReference type="eggNOG" id="COG0582">
    <property type="taxonomic scope" value="Bacteria"/>
</dbReference>
<dbReference type="InParanoid" id="P96629"/>
<dbReference type="OrthoDB" id="9803188at2"/>
<dbReference type="PhylomeDB" id="P96629"/>
<dbReference type="BioCyc" id="BSUB:BSU04800-MONOMER"/>
<dbReference type="Proteomes" id="UP000001570">
    <property type="component" value="Chromosome"/>
</dbReference>
<dbReference type="GO" id="GO:0003677">
    <property type="term" value="F:DNA binding"/>
    <property type="evidence" value="ECO:0007669"/>
    <property type="project" value="UniProtKB-KW"/>
</dbReference>
<dbReference type="GO" id="GO:0009009">
    <property type="term" value="F:site-specific recombinase activity"/>
    <property type="evidence" value="ECO:0000318"/>
    <property type="project" value="GO_Central"/>
</dbReference>
<dbReference type="GO" id="GO:0007059">
    <property type="term" value="P:chromosome segregation"/>
    <property type="evidence" value="ECO:0000318"/>
    <property type="project" value="GO_Central"/>
</dbReference>
<dbReference type="GO" id="GO:0006310">
    <property type="term" value="P:DNA recombination"/>
    <property type="evidence" value="ECO:0000318"/>
    <property type="project" value="GO_Central"/>
</dbReference>
<dbReference type="GO" id="GO:0075713">
    <property type="term" value="P:establishment of integrated proviral latency"/>
    <property type="evidence" value="ECO:0007669"/>
    <property type="project" value="UniProtKB-KW"/>
</dbReference>
<dbReference type="GO" id="GO:0046718">
    <property type="term" value="P:symbiont entry into host cell"/>
    <property type="evidence" value="ECO:0007669"/>
    <property type="project" value="UniProtKB-KW"/>
</dbReference>
<dbReference type="GO" id="GO:0044826">
    <property type="term" value="P:viral genome integration into host DNA"/>
    <property type="evidence" value="ECO:0007669"/>
    <property type="project" value="UniProtKB-KW"/>
</dbReference>
<dbReference type="CDD" id="cd01189">
    <property type="entry name" value="INT_ICEBs1_C_like"/>
    <property type="match status" value="1"/>
</dbReference>
<dbReference type="Gene3D" id="1.10.150.130">
    <property type="match status" value="1"/>
</dbReference>
<dbReference type="Gene3D" id="1.10.443.10">
    <property type="entry name" value="Intergrase catalytic core"/>
    <property type="match status" value="1"/>
</dbReference>
<dbReference type="InterPro" id="IPR044068">
    <property type="entry name" value="CB"/>
</dbReference>
<dbReference type="InterPro" id="IPR011010">
    <property type="entry name" value="DNA_brk_join_enz"/>
</dbReference>
<dbReference type="InterPro" id="IPR013762">
    <property type="entry name" value="Integrase-like_cat_sf"/>
</dbReference>
<dbReference type="InterPro" id="IPR002104">
    <property type="entry name" value="Integrase_catalytic"/>
</dbReference>
<dbReference type="InterPro" id="IPR010998">
    <property type="entry name" value="Integrase_recombinase_N"/>
</dbReference>
<dbReference type="InterPro" id="IPR004107">
    <property type="entry name" value="Integrase_SAM-like_N"/>
</dbReference>
<dbReference type="InterPro" id="IPR050090">
    <property type="entry name" value="Tyrosine_recombinase_XerCD"/>
</dbReference>
<dbReference type="PANTHER" id="PTHR30349">
    <property type="entry name" value="PHAGE INTEGRASE-RELATED"/>
    <property type="match status" value="1"/>
</dbReference>
<dbReference type="PANTHER" id="PTHR30349:SF64">
    <property type="entry name" value="PROPHAGE INTEGRASE INTD-RELATED"/>
    <property type="match status" value="1"/>
</dbReference>
<dbReference type="Pfam" id="PF14659">
    <property type="entry name" value="Phage_int_SAM_3"/>
    <property type="match status" value="1"/>
</dbReference>
<dbReference type="Pfam" id="PF00589">
    <property type="entry name" value="Phage_integrase"/>
    <property type="match status" value="1"/>
</dbReference>
<dbReference type="SUPFAM" id="SSF56349">
    <property type="entry name" value="DNA breaking-rejoining enzymes"/>
    <property type="match status" value="1"/>
</dbReference>
<dbReference type="PROSITE" id="PS51900">
    <property type="entry name" value="CB"/>
    <property type="match status" value="1"/>
</dbReference>
<dbReference type="PROSITE" id="PS51898">
    <property type="entry name" value="TYR_RECOMBINASE"/>
    <property type="match status" value="1"/>
</dbReference>